<dbReference type="EMBL" id="AK020460">
    <property type="protein sequence ID" value="BAB32109.1"/>
    <property type="molecule type" value="mRNA"/>
</dbReference>
<dbReference type="EMBL" id="AK078159">
    <property type="protein sequence ID" value="BAC37153.1"/>
    <property type="molecule type" value="mRNA"/>
</dbReference>
<dbReference type="EMBL" id="AC131791">
    <property type="status" value="NOT_ANNOTATED_CDS"/>
    <property type="molecule type" value="Genomic_DNA"/>
</dbReference>
<dbReference type="EMBL" id="CH466531">
    <property type="protein sequence ID" value="EDL17824.1"/>
    <property type="molecule type" value="Genomic_DNA"/>
</dbReference>
<dbReference type="CCDS" id="CCDS52424.1"/>
<dbReference type="RefSeq" id="NP_084162.1">
    <property type="nucleotide sequence ID" value="NM_029886.2"/>
</dbReference>
<dbReference type="FunCoup" id="Q9CX25">
    <property type="interactions" value="3"/>
</dbReference>
<dbReference type="STRING" id="10090.ENSMUSP00000070550"/>
<dbReference type="iPTMnet" id="Q9CX25"/>
<dbReference type="PhosphoSitePlus" id="Q9CX25"/>
<dbReference type="PaxDb" id="10090-ENSMUSP00000070550"/>
<dbReference type="Ensembl" id="ENSMUST00000068996.13">
    <property type="protein sequence ID" value="ENSMUSP00000070550.7"/>
    <property type="gene ID" value="ENSMUSG00000040139.15"/>
</dbReference>
<dbReference type="GeneID" id="77252"/>
<dbReference type="KEGG" id="mmu:77252"/>
<dbReference type="UCSC" id="uc009ket.2">
    <property type="organism name" value="mouse"/>
</dbReference>
<dbReference type="AGR" id="MGI:1924502"/>
<dbReference type="MGI" id="MGI:1924502">
    <property type="gene designation" value="9430038I01Rik"/>
</dbReference>
<dbReference type="VEuPathDB" id="HostDB:ENSMUSG00000040139"/>
<dbReference type="eggNOG" id="ENOG502TG47">
    <property type="taxonomic scope" value="Eukaryota"/>
</dbReference>
<dbReference type="GeneTree" id="ENSGT01130000278369"/>
<dbReference type="InParanoid" id="Q9CX25"/>
<dbReference type="OMA" id="CHPVNAC"/>
<dbReference type="OrthoDB" id="5955292at2759"/>
<dbReference type="TreeFam" id="TF319465"/>
<dbReference type="BioGRID-ORCS" id="77252">
    <property type="hits" value="5 hits in 76 CRISPR screens"/>
</dbReference>
<dbReference type="PRO" id="PR:Q9CX25"/>
<dbReference type="Proteomes" id="UP000000589">
    <property type="component" value="Chromosome 7"/>
</dbReference>
<dbReference type="RNAct" id="Q9CX25">
    <property type="molecule type" value="protein"/>
</dbReference>
<dbReference type="Bgee" id="ENSMUSG00000040139">
    <property type="expression patterns" value="Expressed in cleaving embryo and 186 other cell types or tissues"/>
</dbReference>
<dbReference type="ExpressionAtlas" id="Q9CX25">
    <property type="expression patterns" value="baseline and differential"/>
</dbReference>
<name>CJ143_MOUSE</name>
<accession>Q9CX25</accession>
<organism>
    <name type="scientific">Mus musculus</name>
    <name type="common">Mouse</name>
    <dbReference type="NCBI Taxonomy" id="10090"/>
    <lineage>
        <taxon>Eukaryota</taxon>
        <taxon>Metazoa</taxon>
        <taxon>Chordata</taxon>
        <taxon>Craniata</taxon>
        <taxon>Vertebrata</taxon>
        <taxon>Euteleostomi</taxon>
        <taxon>Mammalia</taxon>
        <taxon>Eutheria</taxon>
        <taxon>Euarchontoglires</taxon>
        <taxon>Glires</taxon>
        <taxon>Rodentia</taxon>
        <taxon>Myomorpha</taxon>
        <taxon>Muroidea</taxon>
        <taxon>Muridae</taxon>
        <taxon>Murinae</taxon>
        <taxon>Mus</taxon>
        <taxon>Mus</taxon>
    </lineage>
</organism>
<sequence length="107" mass="11786">MDSLASGRWRRRRTEELPAAGDAKRACRRSEPGGYECSGHMLTTCALLSWSTEDQEPRPRGLPASQPDCSQERLSSMVLQNGGRSSAQPCLRCISGESGHFNHTDNH</sequence>
<keyword id="KW-1185">Reference proteome</keyword>
<reference key="1">
    <citation type="journal article" date="2005" name="Science">
        <title>The transcriptional landscape of the mammalian genome.</title>
        <authorList>
            <person name="Carninci P."/>
            <person name="Kasukawa T."/>
            <person name="Katayama S."/>
            <person name="Gough J."/>
            <person name="Frith M.C."/>
            <person name="Maeda N."/>
            <person name="Oyama R."/>
            <person name="Ravasi T."/>
            <person name="Lenhard B."/>
            <person name="Wells C."/>
            <person name="Kodzius R."/>
            <person name="Shimokawa K."/>
            <person name="Bajic V.B."/>
            <person name="Brenner S.E."/>
            <person name="Batalov S."/>
            <person name="Forrest A.R."/>
            <person name="Zavolan M."/>
            <person name="Davis M.J."/>
            <person name="Wilming L.G."/>
            <person name="Aidinis V."/>
            <person name="Allen J.E."/>
            <person name="Ambesi-Impiombato A."/>
            <person name="Apweiler R."/>
            <person name="Aturaliya R.N."/>
            <person name="Bailey T.L."/>
            <person name="Bansal M."/>
            <person name="Baxter L."/>
            <person name="Beisel K.W."/>
            <person name="Bersano T."/>
            <person name="Bono H."/>
            <person name="Chalk A.M."/>
            <person name="Chiu K.P."/>
            <person name="Choudhary V."/>
            <person name="Christoffels A."/>
            <person name="Clutterbuck D.R."/>
            <person name="Crowe M.L."/>
            <person name="Dalla E."/>
            <person name="Dalrymple B.P."/>
            <person name="de Bono B."/>
            <person name="Della Gatta G."/>
            <person name="di Bernardo D."/>
            <person name="Down T."/>
            <person name="Engstrom P."/>
            <person name="Fagiolini M."/>
            <person name="Faulkner G."/>
            <person name="Fletcher C.F."/>
            <person name="Fukushima T."/>
            <person name="Furuno M."/>
            <person name="Futaki S."/>
            <person name="Gariboldi M."/>
            <person name="Georgii-Hemming P."/>
            <person name="Gingeras T.R."/>
            <person name="Gojobori T."/>
            <person name="Green R.E."/>
            <person name="Gustincich S."/>
            <person name="Harbers M."/>
            <person name="Hayashi Y."/>
            <person name="Hensch T.K."/>
            <person name="Hirokawa N."/>
            <person name="Hill D."/>
            <person name="Huminiecki L."/>
            <person name="Iacono M."/>
            <person name="Ikeo K."/>
            <person name="Iwama A."/>
            <person name="Ishikawa T."/>
            <person name="Jakt M."/>
            <person name="Kanapin A."/>
            <person name="Katoh M."/>
            <person name="Kawasawa Y."/>
            <person name="Kelso J."/>
            <person name="Kitamura H."/>
            <person name="Kitano H."/>
            <person name="Kollias G."/>
            <person name="Krishnan S.P."/>
            <person name="Kruger A."/>
            <person name="Kummerfeld S.K."/>
            <person name="Kurochkin I.V."/>
            <person name="Lareau L.F."/>
            <person name="Lazarevic D."/>
            <person name="Lipovich L."/>
            <person name="Liu J."/>
            <person name="Liuni S."/>
            <person name="McWilliam S."/>
            <person name="Madan Babu M."/>
            <person name="Madera M."/>
            <person name="Marchionni L."/>
            <person name="Matsuda H."/>
            <person name="Matsuzawa S."/>
            <person name="Miki H."/>
            <person name="Mignone F."/>
            <person name="Miyake S."/>
            <person name="Morris K."/>
            <person name="Mottagui-Tabar S."/>
            <person name="Mulder N."/>
            <person name="Nakano N."/>
            <person name="Nakauchi H."/>
            <person name="Ng P."/>
            <person name="Nilsson R."/>
            <person name="Nishiguchi S."/>
            <person name="Nishikawa S."/>
            <person name="Nori F."/>
            <person name="Ohara O."/>
            <person name="Okazaki Y."/>
            <person name="Orlando V."/>
            <person name="Pang K.C."/>
            <person name="Pavan W.J."/>
            <person name="Pavesi G."/>
            <person name="Pesole G."/>
            <person name="Petrovsky N."/>
            <person name="Piazza S."/>
            <person name="Reed J."/>
            <person name="Reid J.F."/>
            <person name="Ring B.Z."/>
            <person name="Ringwald M."/>
            <person name="Rost B."/>
            <person name="Ruan Y."/>
            <person name="Salzberg S.L."/>
            <person name="Sandelin A."/>
            <person name="Schneider C."/>
            <person name="Schoenbach C."/>
            <person name="Sekiguchi K."/>
            <person name="Semple C.A."/>
            <person name="Seno S."/>
            <person name="Sessa L."/>
            <person name="Sheng Y."/>
            <person name="Shibata Y."/>
            <person name="Shimada H."/>
            <person name="Shimada K."/>
            <person name="Silva D."/>
            <person name="Sinclair B."/>
            <person name="Sperling S."/>
            <person name="Stupka E."/>
            <person name="Sugiura K."/>
            <person name="Sultana R."/>
            <person name="Takenaka Y."/>
            <person name="Taki K."/>
            <person name="Tammoja K."/>
            <person name="Tan S.L."/>
            <person name="Tang S."/>
            <person name="Taylor M.S."/>
            <person name="Tegner J."/>
            <person name="Teichmann S.A."/>
            <person name="Ueda H.R."/>
            <person name="van Nimwegen E."/>
            <person name="Verardo R."/>
            <person name="Wei C.L."/>
            <person name="Yagi K."/>
            <person name="Yamanishi H."/>
            <person name="Zabarovsky E."/>
            <person name="Zhu S."/>
            <person name="Zimmer A."/>
            <person name="Hide W."/>
            <person name="Bult C."/>
            <person name="Grimmond S.M."/>
            <person name="Teasdale R.D."/>
            <person name="Liu E.T."/>
            <person name="Brusic V."/>
            <person name="Quackenbush J."/>
            <person name="Wahlestedt C."/>
            <person name="Mattick J.S."/>
            <person name="Hume D.A."/>
            <person name="Kai C."/>
            <person name="Sasaki D."/>
            <person name="Tomaru Y."/>
            <person name="Fukuda S."/>
            <person name="Kanamori-Katayama M."/>
            <person name="Suzuki M."/>
            <person name="Aoki J."/>
            <person name="Arakawa T."/>
            <person name="Iida J."/>
            <person name="Imamura K."/>
            <person name="Itoh M."/>
            <person name="Kato T."/>
            <person name="Kawaji H."/>
            <person name="Kawagashira N."/>
            <person name="Kawashima T."/>
            <person name="Kojima M."/>
            <person name="Kondo S."/>
            <person name="Konno H."/>
            <person name="Nakano K."/>
            <person name="Ninomiya N."/>
            <person name="Nishio T."/>
            <person name="Okada M."/>
            <person name="Plessy C."/>
            <person name="Shibata K."/>
            <person name="Shiraki T."/>
            <person name="Suzuki S."/>
            <person name="Tagami M."/>
            <person name="Waki K."/>
            <person name="Watahiki A."/>
            <person name="Okamura-Oho Y."/>
            <person name="Suzuki H."/>
            <person name="Kawai J."/>
            <person name="Hayashizaki Y."/>
        </authorList>
    </citation>
    <scope>NUCLEOTIDE SEQUENCE [LARGE SCALE MRNA]</scope>
</reference>
<reference key="2">
    <citation type="journal article" date="2009" name="PLoS Biol.">
        <title>Lineage-specific biology revealed by a finished genome assembly of the mouse.</title>
        <authorList>
            <person name="Church D.M."/>
            <person name="Goodstadt L."/>
            <person name="Hillier L.W."/>
            <person name="Zody M.C."/>
            <person name="Goldstein S."/>
            <person name="She X."/>
            <person name="Bult C.J."/>
            <person name="Agarwala R."/>
            <person name="Cherry J.L."/>
            <person name="DiCuccio M."/>
            <person name="Hlavina W."/>
            <person name="Kapustin Y."/>
            <person name="Meric P."/>
            <person name="Maglott D."/>
            <person name="Birtle Z."/>
            <person name="Marques A.C."/>
            <person name="Graves T."/>
            <person name="Zhou S."/>
            <person name="Teague B."/>
            <person name="Potamousis K."/>
            <person name="Churas C."/>
            <person name="Place M."/>
            <person name="Herschleb J."/>
            <person name="Runnheim R."/>
            <person name="Forrest D."/>
            <person name="Amos-Landgraf J."/>
            <person name="Schwartz D.C."/>
            <person name="Cheng Z."/>
            <person name="Lindblad-Toh K."/>
            <person name="Eichler E.E."/>
            <person name="Ponting C.P."/>
        </authorList>
    </citation>
    <scope>NUCLEOTIDE SEQUENCE [LARGE SCALE GENOMIC DNA]</scope>
    <source>
        <strain>C57BL/6J</strain>
    </source>
</reference>
<reference key="3">
    <citation type="submission" date="2005-07" db="EMBL/GenBank/DDBJ databases">
        <authorList>
            <person name="Mural R.J."/>
            <person name="Adams M.D."/>
            <person name="Myers E.W."/>
            <person name="Smith H.O."/>
            <person name="Venter J.C."/>
        </authorList>
    </citation>
    <scope>NUCLEOTIDE SEQUENCE [LARGE SCALE GENOMIC DNA]</scope>
</reference>
<protein>
    <recommendedName>
        <fullName evidence="2">Uncharacterized protein C10orf143 homolog</fullName>
    </recommendedName>
</protein>
<proteinExistence type="predicted"/>
<feature type="chain" id="PRO_0000442934" description="Uncharacterized protein C10orf143 homolog">
    <location>
        <begin position="1"/>
        <end position="107"/>
    </location>
</feature>
<feature type="region of interest" description="Disordered" evidence="1">
    <location>
        <begin position="1"/>
        <end position="32"/>
    </location>
</feature>
<feature type="compositionally biased region" description="Basic and acidic residues" evidence="1">
    <location>
        <begin position="22"/>
        <end position="31"/>
    </location>
</feature>
<evidence type="ECO:0000256" key="1">
    <source>
        <dbReference type="SAM" id="MobiDB-lite"/>
    </source>
</evidence>
<evidence type="ECO:0000305" key="2"/>